<keyword id="KW-0877">Alternative promoter usage</keyword>
<keyword id="KW-0963">Cytoplasm</keyword>
<keyword id="KW-0479">Metal-binding</keyword>
<keyword id="KW-0520">NAD</keyword>
<keyword id="KW-1185">Reference proteome</keyword>
<keyword id="KW-0808">Transferase</keyword>
<keyword id="KW-0862">Zinc</keyword>
<sequence>MRIRHRLCRFRKSKHVRHQRFRSRIFHRDSAVAKEMKKPFVVVLTGAGISAESGIRTFRADDGLWEDHRVEDVATPEGYRRDPELVQRFYNERRRQLQQPDIAPNAAHFALADLEAVLGDNLVLITQNIDNLHERAGSKRVIHMHGELLKVRCTQSGQVLDWQGDLSADERCHCCQFPSPLRPHIVWFGEMPMGMDDIYQALAEADFFISIGTSGHVYPAAGFVHESHLHGAHTVELNLEPSQVESQFDEKHYGLASKVVPEYIREFLTTCGENRQGD</sequence>
<feature type="chain" id="PRO_0000110374" description="NAD-dependent protein deacylase">
    <location>
        <begin position="1"/>
        <end position="278"/>
    </location>
</feature>
<feature type="domain" description="Deacetylase sirtuin-type" evidence="3">
    <location>
        <begin position="22"/>
        <end position="270"/>
    </location>
</feature>
<feature type="active site" description="Proton acceptor" evidence="2">
    <location>
        <position position="145"/>
    </location>
</feature>
<feature type="binding site" evidence="2">
    <location>
        <begin position="46"/>
        <end position="65"/>
    </location>
    <ligand>
        <name>NAD(+)</name>
        <dbReference type="ChEBI" id="CHEBI:57540"/>
    </ligand>
</feature>
<feature type="binding site" evidence="2">
    <location>
        <position position="90"/>
    </location>
    <ligand>
        <name>substrate</name>
    </ligand>
</feature>
<feature type="binding site" evidence="2">
    <location>
        <position position="93"/>
    </location>
    <ligand>
        <name>substrate</name>
    </ligand>
</feature>
<feature type="binding site" evidence="2">
    <location>
        <begin position="127"/>
        <end position="130"/>
    </location>
    <ligand>
        <name>NAD(+)</name>
        <dbReference type="ChEBI" id="CHEBI:57540"/>
    </ligand>
</feature>
<feature type="binding site" evidence="2">
    <location>
        <position position="153"/>
    </location>
    <ligand>
        <name>Zn(2+)</name>
        <dbReference type="ChEBI" id="CHEBI:29105"/>
    </ligand>
</feature>
<feature type="binding site" evidence="2">
    <location>
        <position position="172"/>
    </location>
    <ligand>
        <name>Zn(2+)</name>
        <dbReference type="ChEBI" id="CHEBI:29105"/>
    </ligand>
</feature>
<feature type="binding site" evidence="2">
    <location>
        <begin position="212"/>
        <end position="214"/>
    </location>
    <ligand>
        <name>NAD(+)</name>
        <dbReference type="ChEBI" id="CHEBI:57540"/>
    </ligand>
</feature>
<feature type="binding site" evidence="2">
    <location>
        <begin position="238"/>
        <end position="240"/>
    </location>
    <ligand>
        <name>NAD(+)</name>
        <dbReference type="ChEBI" id="CHEBI:57540"/>
    </ligand>
</feature>
<feature type="binding site" evidence="2">
    <location>
        <position position="256"/>
    </location>
    <ligand>
        <name>NAD(+)</name>
        <dbReference type="ChEBI" id="CHEBI:57540"/>
    </ligand>
</feature>
<feature type="splice variant" id="VSP_058464" description="In isoform CobB-Short." evidence="1">
    <location>
        <begin position="1"/>
        <end position="35"/>
    </location>
</feature>
<dbReference type="EC" id="2.3.1.286" evidence="2"/>
<dbReference type="EMBL" id="AL590842">
    <property type="protein sequence ID" value="CAL20275.1"/>
    <property type="molecule type" value="Genomic_DNA"/>
</dbReference>
<dbReference type="EMBL" id="AE009952">
    <property type="protein sequence ID" value="AAM85358.1"/>
    <property type="molecule type" value="Genomic_DNA"/>
</dbReference>
<dbReference type="EMBL" id="AE017042">
    <property type="protein sequence ID" value="AAS61987.1"/>
    <property type="molecule type" value="Genomic_DNA"/>
</dbReference>
<dbReference type="PIR" id="AI0198">
    <property type="entry name" value="AI0198"/>
</dbReference>
<dbReference type="RefSeq" id="WP_002210921.1">
    <property type="nucleotide sequence ID" value="NZ_WUCM01000020.1"/>
</dbReference>
<dbReference type="RefSeq" id="YP_002346641.1">
    <property type="nucleotide sequence ID" value="NC_003143.1"/>
</dbReference>
<dbReference type="SMR" id="Q8ZFR1"/>
<dbReference type="IntAct" id="Q8ZFR1">
    <property type="interactions" value="3"/>
</dbReference>
<dbReference type="STRING" id="214092.YPO1630"/>
<dbReference type="PaxDb" id="214092-YPO1630"/>
<dbReference type="DNASU" id="1146737"/>
<dbReference type="EnsemblBacteria" id="AAS61987">
    <property type="protein sequence ID" value="AAS61987"/>
    <property type="gene ID" value="YP_1760"/>
</dbReference>
<dbReference type="GeneID" id="57976943"/>
<dbReference type="KEGG" id="ype:YPO1630"/>
<dbReference type="KEGG" id="ypk:y1790"/>
<dbReference type="KEGG" id="ypm:YP_1760"/>
<dbReference type="PATRIC" id="fig|214092.21.peg.1975"/>
<dbReference type="eggNOG" id="COG0846">
    <property type="taxonomic scope" value="Bacteria"/>
</dbReference>
<dbReference type="HOGENOM" id="CLU_023643_3_1_6"/>
<dbReference type="OMA" id="LIHMHGE"/>
<dbReference type="OrthoDB" id="9800582at2"/>
<dbReference type="PHI-base" id="PHI:8898"/>
<dbReference type="Proteomes" id="UP000000815">
    <property type="component" value="Chromosome"/>
</dbReference>
<dbReference type="Proteomes" id="UP000001019">
    <property type="component" value="Chromosome"/>
</dbReference>
<dbReference type="Proteomes" id="UP000002490">
    <property type="component" value="Chromosome"/>
</dbReference>
<dbReference type="GO" id="GO:0005737">
    <property type="term" value="C:cytoplasm"/>
    <property type="evidence" value="ECO:0007669"/>
    <property type="project" value="UniProtKB-SubCell"/>
</dbReference>
<dbReference type="GO" id="GO:0017136">
    <property type="term" value="F:histone deacetylase activity, NAD-dependent"/>
    <property type="evidence" value="ECO:0000318"/>
    <property type="project" value="GO_Central"/>
</dbReference>
<dbReference type="GO" id="GO:0070403">
    <property type="term" value="F:NAD+ binding"/>
    <property type="evidence" value="ECO:0000318"/>
    <property type="project" value="GO_Central"/>
</dbReference>
<dbReference type="GO" id="GO:0160013">
    <property type="term" value="F:NAD-dependent protein de-2-hydroxyisobutyrylase activity"/>
    <property type="evidence" value="ECO:0007669"/>
    <property type="project" value="RHEA"/>
</dbReference>
<dbReference type="GO" id="GO:0036054">
    <property type="term" value="F:protein-malonyllysine demalonylase activity"/>
    <property type="evidence" value="ECO:0007669"/>
    <property type="project" value="InterPro"/>
</dbReference>
<dbReference type="GO" id="GO:0036055">
    <property type="term" value="F:protein-succinyllysine desuccinylase activity"/>
    <property type="evidence" value="ECO:0007669"/>
    <property type="project" value="UniProtKB-UniRule"/>
</dbReference>
<dbReference type="GO" id="GO:0008270">
    <property type="term" value="F:zinc ion binding"/>
    <property type="evidence" value="ECO:0007669"/>
    <property type="project" value="UniProtKB-UniRule"/>
</dbReference>
<dbReference type="CDD" id="cd01412">
    <property type="entry name" value="SIRT5_Af1_CobB"/>
    <property type="match status" value="1"/>
</dbReference>
<dbReference type="Gene3D" id="3.30.1600.10">
    <property type="entry name" value="SIR2/SIRT2 'Small Domain"/>
    <property type="match status" value="1"/>
</dbReference>
<dbReference type="Gene3D" id="3.40.50.1220">
    <property type="entry name" value="TPP-binding domain"/>
    <property type="match status" value="1"/>
</dbReference>
<dbReference type="HAMAP" id="MF_01121">
    <property type="entry name" value="Sirtuin_ClassIII"/>
    <property type="match status" value="1"/>
</dbReference>
<dbReference type="InterPro" id="IPR029035">
    <property type="entry name" value="DHS-like_NAD/FAD-binding_dom"/>
</dbReference>
<dbReference type="InterPro" id="IPR050134">
    <property type="entry name" value="NAD-dep_sirtuin_deacylases"/>
</dbReference>
<dbReference type="InterPro" id="IPR003000">
    <property type="entry name" value="Sirtuin"/>
</dbReference>
<dbReference type="InterPro" id="IPR026591">
    <property type="entry name" value="Sirtuin_cat_small_dom_sf"/>
</dbReference>
<dbReference type="InterPro" id="IPR027546">
    <property type="entry name" value="Sirtuin_class_III"/>
</dbReference>
<dbReference type="InterPro" id="IPR026590">
    <property type="entry name" value="Ssirtuin_cat_dom"/>
</dbReference>
<dbReference type="NCBIfam" id="NF001755">
    <property type="entry name" value="PRK00481.1-5"/>
    <property type="match status" value="1"/>
</dbReference>
<dbReference type="PANTHER" id="PTHR11085:SF4">
    <property type="entry name" value="NAD-DEPENDENT PROTEIN DEACYLASE"/>
    <property type="match status" value="1"/>
</dbReference>
<dbReference type="PANTHER" id="PTHR11085">
    <property type="entry name" value="NAD-DEPENDENT PROTEIN DEACYLASE SIRTUIN-5, MITOCHONDRIAL-RELATED"/>
    <property type="match status" value="1"/>
</dbReference>
<dbReference type="Pfam" id="PF02146">
    <property type="entry name" value="SIR2"/>
    <property type="match status" value="1"/>
</dbReference>
<dbReference type="SUPFAM" id="SSF52467">
    <property type="entry name" value="DHS-like NAD/FAD-binding domain"/>
    <property type="match status" value="1"/>
</dbReference>
<dbReference type="PROSITE" id="PS50305">
    <property type="entry name" value="SIRTUIN"/>
    <property type="match status" value="1"/>
</dbReference>
<reference key="1">
    <citation type="journal article" date="2001" name="Nature">
        <title>Genome sequence of Yersinia pestis, the causative agent of plague.</title>
        <authorList>
            <person name="Parkhill J."/>
            <person name="Wren B.W."/>
            <person name="Thomson N.R."/>
            <person name="Titball R.W."/>
            <person name="Holden M.T.G."/>
            <person name="Prentice M.B."/>
            <person name="Sebaihia M."/>
            <person name="James K.D."/>
            <person name="Churcher C.M."/>
            <person name="Mungall K.L."/>
            <person name="Baker S."/>
            <person name="Basham D."/>
            <person name="Bentley S.D."/>
            <person name="Brooks K."/>
            <person name="Cerdeno-Tarraga A.-M."/>
            <person name="Chillingworth T."/>
            <person name="Cronin A."/>
            <person name="Davies R.M."/>
            <person name="Davis P."/>
            <person name="Dougan G."/>
            <person name="Feltwell T."/>
            <person name="Hamlin N."/>
            <person name="Holroyd S."/>
            <person name="Jagels K."/>
            <person name="Karlyshev A.V."/>
            <person name="Leather S."/>
            <person name="Moule S."/>
            <person name="Oyston P.C.F."/>
            <person name="Quail M.A."/>
            <person name="Rutherford K.M."/>
            <person name="Simmonds M."/>
            <person name="Skelton J."/>
            <person name="Stevens K."/>
            <person name="Whitehead S."/>
            <person name="Barrell B.G."/>
        </authorList>
    </citation>
    <scope>NUCLEOTIDE SEQUENCE [LARGE SCALE GENOMIC DNA]</scope>
    <source>
        <strain>CO-92 / Biovar Orientalis</strain>
    </source>
</reference>
<reference key="2">
    <citation type="journal article" date="2002" name="J. Bacteriol.">
        <title>Genome sequence of Yersinia pestis KIM.</title>
        <authorList>
            <person name="Deng W."/>
            <person name="Burland V."/>
            <person name="Plunkett G. III"/>
            <person name="Boutin A."/>
            <person name="Mayhew G.F."/>
            <person name="Liss P."/>
            <person name="Perna N.T."/>
            <person name="Rose D.J."/>
            <person name="Mau B."/>
            <person name="Zhou S."/>
            <person name="Schwartz D.C."/>
            <person name="Fetherston J.D."/>
            <person name="Lindler L.E."/>
            <person name="Brubaker R.R."/>
            <person name="Plano G.V."/>
            <person name="Straley S.C."/>
            <person name="McDonough K.A."/>
            <person name="Nilles M.L."/>
            <person name="Matson J.S."/>
            <person name="Blattner F.R."/>
            <person name="Perry R.D."/>
        </authorList>
    </citation>
    <scope>NUCLEOTIDE SEQUENCE [LARGE SCALE GENOMIC DNA]</scope>
    <source>
        <strain>KIM10+ / Biovar Mediaevalis</strain>
    </source>
</reference>
<reference key="3">
    <citation type="journal article" date="2004" name="DNA Res.">
        <title>Complete genome sequence of Yersinia pestis strain 91001, an isolate avirulent to humans.</title>
        <authorList>
            <person name="Song Y."/>
            <person name="Tong Z."/>
            <person name="Wang J."/>
            <person name="Wang L."/>
            <person name="Guo Z."/>
            <person name="Han Y."/>
            <person name="Zhang J."/>
            <person name="Pei D."/>
            <person name="Zhou D."/>
            <person name="Qin H."/>
            <person name="Pang X."/>
            <person name="Han Y."/>
            <person name="Zhai J."/>
            <person name="Li M."/>
            <person name="Cui B."/>
            <person name="Qi Z."/>
            <person name="Jin L."/>
            <person name="Dai R."/>
            <person name="Chen F."/>
            <person name="Li S."/>
            <person name="Ye C."/>
            <person name="Du Z."/>
            <person name="Lin W."/>
            <person name="Wang J."/>
            <person name="Yu J."/>
            <person name="Yang H."/>
            <person name="Wang J."/>
            <person name="Huang P."/>
            <person name="Yang R."/>
        </authorList>
    </citation>
    <scope>NUCLEOTIDE SEQUENCE [LARGE SCALE GENOMIC DNA]</scope>
    <source>
        <strain>91001 / Biovar Mediaevalis</strain>
    </source>
</reference>
<evidence type="ECO:0000250" key="1">
    <source>
        <dbReference type="UniProtKB" id="P0A2F2"/>
    </source>
</evidence>
<evidence type="ECO:0000255" key="2">
    <source>
        <dbReference type="HAMAP-Rule" id="MF_01121"/>
    </source>
</evidence>
<evidence type="ECO:0000255" key="3">
    <source>
        <dbReference type="PROSITE-ProRule" id="PRU00236"/>
    </source>
</evidence>
<comment type="function">
    <text evidence="2">NAD-dependent lysine deacetylase that specifically removes acetyl groups on target proteins. Also acts as a protein-lysine deacylase by mediating protein desuccinylation and de-2-hydroxyisobutyrylation. Modulates the activities of several proteins which are inactive in their acylated form.</text>
</comment>
<comment type="catalytic activity">
    <reaction evidence="2">
        <text>N(6)-acetyl-L-lysyl-[protein] + NAD(+) + H2O = 2''-O-acetyl-ADP-D-ribose + nicotinamide + L-lysyl-[protein]</text>
        <dbReference type="Rhea" id="RHEA:43636"/>
        <dbReference type="Rhea" id="RHEA-COMP:9752"/>
        <dbReference type="Rhea" id="RHEA-COMP:10731"/>
        <dbReference type="ChEBI" id="CHEBI:15377"/>
        <dbReference type="ChEBI" id="CHEBI:17154"/>
        <dbReference type="ChEBI" id="CHEBI:29969"/>
        <dbReference type="ChEBI" id="CHEBI:57540"/>
        <dbReference type="ChEBI" id="CHEBI:61930"/>
        <dbReference type="ChEBI" id="CHEBI:83767"/>
        <dbReference type="EC" id="2.3.1.286"/>
    </reaction>
</comment>
<comment type="catalytic activity">
    <reaction evidence="2">
        <text>N(6)-succinyl-L-lysyl-[protein] + NAD(+) + H2O = 2''-O-succinyl-ADP-D-ribose + nicotinamide + L-lysyl-[protein]</text>
        <dbReference type="Rhea" id="RHEA:47668"/>
        <dbReference type="Rhea" id="RHEA-COMP:9752"/>
        <dbReference type="Rhea" id="RHEA-COMP:11877"/>
        <dbReference type="ChEBI" id="CHEBI:15377"/>
        <dbReference type="ChEBI" id="CHEBI:17154"/>
        <dbReference type="ChEBI" id="CHEBI:29969"/>
        <dbReference type="ChEBI" id="CHEBI:57540"/>
        <dbReference type="ChEBI" id="CHEBI:87830"/>
        <dbReference type="ChEBI" id="CHEBI:87832"/>
    </reaction>
</comment>
<comment type="catalytic activity">
    <reaction evidence="2">
        <text>N(6)-(2-hydroxyisobutanoyl)-L-lysyl-[protein] + NAD(+) + H2O = 2''-O-(2-hydroxyisobutanoyl)-ADP-D-ribose + nicotinamide + L-lysyl-[protein]</text>
        <dbReference type="Rhea" id="RHEA:24364"/>
        <dbReference type="Rhea" id="RHEA-COMP:9752"/>
        <dbReference type="Rhea" id="RHEA-COMP:15921"/>
        <dbReference type="ChEBI" id="CHEBI:15377"/>
        <dbReference type="ChEBI" id="CHEBI:17154"/>
        <dbReference type="ChEBI" id="CHEBI:29969"/>
        <dbReference type="ChEBI" id="CHEBI:57540"/>
        <dbReference type="ChEBI" id="CHEBI:144968"/>
        <dbReference type="ChEBI" id="CHEBI:144969"/>
    </reaction>
</comment>
<comment type="cofactor">
    <cofactor evidence="2">
        <name>Zn(2+)</name>
        <dbReference type="ChEBI" id="CHEBI:29105"/>
    </cofactor>
    <text evidence="2">Binds 1 zinc ion per subunit.</text>
</comment>
<comment type="subcellular location">
    <subcellularLocation>
        <location evidence="2">Cytoplasm</location>
    </subcellularLocation>
</comment>
<comment type="alternative products">
    <event type="alternative promoter"/>
    <isoform>
        <id>Q8ZFR1-1</id>
        <name evidence="1">CobB-Long</name>
        <sequence type="displayed"/>
    </isoform>
    <isoform>
        <id>Q8ZFR1-2</id>
        <name evidence="1">CobB-Short</name>
        <sequence type="described" ref="VSP_058464"/>
    </isoform>
</comment>
<comment type="domain">
    <text evidence="2">2 residues (Tyr-90 and Arg-93) present in a large hydrophobic pocket are probably involved in substrate specificity. They are important for desuccinylation activity, but dispensable for deacetylation activity.</text>
</comment>
<comment type="similarity">
    <text evidence="2">Belongs to the sirtuin family. Class III subfamily.</text>
</comment>
<protein>
    <recommendedName>
        <fullName evidence="2">NAD-dependent protein deacylase</fullName>
        <ecNumber evidence="2">2.3.1.286</ecNumber>
    </recommendedName>
    <alternativeName>
        <fullName evidence="2">Regulatory protein SIR2 homolog</fullName>
    </alternativeName>
</protein>
<proteinExistence type="inferred from homology"/>
<name>NPD_YERPE</name>
<organism>
    <name type="scientific">Yersinia pestis</name>
    <dbReference type="NCBI Taxonomy" id="632"/>
    <lineage>
        <taxon>Bacteria</taxon>
        <taxon>Pseudomonadati</taxon>
        <taxon>Pseudomonadota</taxon>
        <taxon>Gammaproteobacteria</taxon>
        <taxon>Enterobacterales</taxon>
        <taxon>Yersiniaceae</taxon>
        <taxon>Yersinia</taxon>
    </lineage>
</organism>
<accession>Q8ZFR1</accession>
<accession>Q0WGE7</accession>
<gene>
    <name evidence="2" type="primary">cobB</name>
    <name type="ordered locus">YPO1630</name>
    <name type="ordered locus">y1790</name>
    <name type="ordered locus">YP_1760</name>
</gene>